<evidence type="ECO:0000250" key="1"/>
<evidence type="ECO:0000250" key="2">
    <source>
        <dbReference type="UniProtKB" id="P38272"/>
    </source>
</evidence>
<evidence type="ECO:0000255" key="3"/>
<evidence type="ECO:0000256" key="4">
    <source>
        <dbReference type="SAM" id="MobiDB-lite"/>
    </source>
</evidence>
<evidence type="ECO:0000305" key="5"/>
<gene>
    <name type="primary">SHE3</name>
    <name type="ORF">SCRG_02838</name>
</gene>
<dbReference type="EMBL" id="CH408048">
    <property type="protein sequence ID" value="EDV11979.1"/>
    <property type="molecule type" value="Genomic_DNA"/>
</dbReference>
<dbReference type="SMR" id="B3LN26"/>
<dbReference type="HOGENOM" id="CLU_038734_0_0_1"/>
<dbReference type="OrthoDB" id="39876at4893"/>
<dbReference type="Proteomes" id="UP000008335">
    <property type="component" value="Unassembled WGS sequence"/>
</dbReference>
<dbReference type="GO" id="GO:0005789">
    <property type="term" value="C:endoplasmic reticulum membrane"/>
    <property type="evidence" value="ECO:0007669"/>
    <property type="project" value="UniProtKB-SubCell"/>
</dbReference>
<dbReference type="GO" id="GO:0003723">
    <property type="term" value="F:RNA binding"/>
    <property type="evidence" value="ECO:0007669"/>
    <property type="project" value="UniProtKB-KW"/>
</dbReference>
<dbReference type="GO" id="GO:0048309">
    <property type="term" value="P:endoplasmic reticulum inheritance"/>
    <property type="evidence" value="ECO:0007669"/>
    <property type="project" value="InterPro"/>
</dbReference>
<dbReference type="GO" id="GO:0051028">
    <property type="term" value="P:mRNA transport"/>
    <property type="evidence" value="ECO:0007669"/>
    <property type="project" value="UniProtKB-KW"/>
</dbReference>
<dbReference type="InterPro" id="IPR031398">
    <property type="entry name" value="She3"/>
</dbReference>
<dbReference type="Pfam" id="PF17078">
    <property type="entry name" value="SHE3"/>
    <property type="match status" value="1"/>
</dbReference>
<accession>B3LN26</accession>
<keyword id="KW-0175">Coiled coil</keyword>
<keyword id="KW-0256">Endoplasmic reticulum</keyword>
<keyword id="KW-0472">Membrane</keyword>
<keyword id="KW-0509">mRNA transport</keyword>
<keyword id="KW-0597">Phosphoprotein</keyword>
<keyword id="KW-0694">RNA-binding</keyword>
<keyword id="KW-0813">Transport</keyword>
<protein>
    <recommendedName>
        <fullName>SWI5-dependent HO expression protein 3</fullName>
    </recommendedName>
</protein>
<name>SHE3_YEAS1</name>
<comment type="function">
    <text evidence="1">RNA-binding protein that binds specific mRNAs including the ASH1 mRNA, coding for a repressor of the HO endonuclease. Part of the mRNA localization machinery that restricts accumulation of certain proteins to the bud and in the daughter cell. Required for the delivery of cortical endoplasmic reticulum into the emerging bud (By similarity).</text>
</comment>
<comment type="subcellular location">
    <subcellularLocation>
        <location evidence="1">Endoplasmic reticulum membrane</location>
        <topology evidence="1">Peripheral membrane protein</topology>
    </subcellularLocation>
</comment>
<comment type="similarity">
    <text evidence="5">Belongs to the SHE3 family.</text>
</comment>
<proteinExistence type="inferred from homology"/>
<sequence>MSDQDNTQTSSSKLAPHHNIFMANLESSPTKDRNTSSQNASSSRVIESLHDQIDMLTKTNLQLTTQSQNLLSKLELAQSKESKLLENLNLLKNENENLNSIFERKNKKLKELEKDYSELSNRYNEQKEKMDQLSKLAKNSSAIEQSCSEKLQNMEVNYNSLLESQNLYRDHYSDEISKLNEKIGLLELELSNQNLNYGSDTSSNSDIELNLNKFNDSVKDLKSLETEKDSKLSKIITHSLDELNLQSWLNLYQTNENLISTFAEKMDLKDVLKRNDEKISNKGAVVQTLKKNVQTQVESNNADALSSNNAQDMLPIKMVKLRKTPNTNDSSSNGNSSNNKRRSFYTASPLLSSGSIPKSASPVLPGVKRTASVRKPSSSSSKTNVTHNNDPSTSPTISVPPGVTRTVSSTHKKKRNSMVVHGAQS</sequence>
<reference key="1">
    <citation type="submission" date="2005-03" db="EMBL/GenBank/DDBJ databases">
        <title>Annotation of the Saccharomyces cerevisiae RM11-1a genome.</title>
        <authorList>
            <consortium name="The Broad Institute Genome Sequencing Platform"/>
            <person name="Birren B.W."/>
            <person name="Lander E.S."/>
            <person name="Galagan J.E."/>
            <person name="Nusbaum C."/>
            <person name="Devon K."/>
            <person name="Cuomo C."/>
            <person name="Jaffe D.B."/>
            <person name="Butler J."/>
            <person name="Alvarez P."/>
            <person name="Gnerre S."/>
            <person name="Grabherr M."/>
            <person name="Kleber M."/>
            <person name="Mauceli E.W."/>
            <person name="Brockman W."/>
            <person name="MacCallum I.A."/>
            <person name="Rounsley S."/>
            <person name="Young S.K."/>
            <person name="LaButti K."/>
            <person name="Pushparaj V."/>
            <person name="DeCaprio D."/>
            <person name="Crawford M."/>
            <person name="Koehrsen M."/>
            <person name="Engels R."/>
            <person name="Montgomery P."/>
            <person name="Pearson M."/>
            <person name="Howarth C."/>
            <person name="Larson L."/>
            <person name="Luoma S."/>
            <person name="White J."/>
            <person name="O'Leary S."/>
            <person name="Kodira C.D."/>
            <person name="Zeng Q."/>
            <person name="Yandava C."/>
            <person name="Alvarado L."/>
            <person name="Pratt S."/>
            <person name="Kruglyak L."/>
        </authorList>
    </citation>
    <scope>NUCLEOTIDE SEQUENCE [LARGE SCALE GENOMIC DNA]</scope>
    <source>
        <strain>RM11-1a</strain>
    </source>
</reference>
<organism>
    <name type="scientific">Saccharomyces cerevisiae (strain RM11-1a)</name>
    <name type="common">Baker's yeast</name>
    <dbReference type="NCBI Taxonomy" id="285006"/>
    <lineage>
        <taxon>Eukaryota</taxon>
        <taxon>Fungi</taxon>
        <taxon>Dikarya</taxon>
        <taxon>Ascomycota</taxon>
        <taxon>Saccharomycotina</taxon>
        <taxon>Saccharomycetes</taxon>
        <taxon>Saccharomycetales</taxon>
        <taxon>Saccharomycetaceae</taxon>
        <taxon>Saccharomyces</taxon>
    </lineage>
</organism>
<feature type="chain" id="PRO_0000408937" description="SWI5-dependent HO expression protein 3">
    <location>
        <begin position="1"/>
        <end position="425"/>
    </location>
</feature>
<feature type="region of interest" description="Disordered" evidence="4">
    <location>
        <begin position="24"/>
        <end position="45"/>
    </location>
</feature>
<feature type="region of interest" description="Disordered" evidence="4">
    <location>
        <begin position="322"/>
        <end position="425"/>
    </location>
</feature>
<feature type="coiled-coil region" evidence="3">
    <location>
        <begin position="68"/>
        <end position="197"/>
    </location>
</feature>
<feature type="compositionally biased region" description="Polar residues" evidence="4">
    <location>
        <begin position="35"/>
        <end position="45"/>
    </location>
</feature>
<feature type="compositionally biased region" description="Low complexity" evidence="4">
    <location>
        <begin position="326"/>
        <end position="338"/>
    </location>
</feature>
<feature type="compositionally biased region" description="Polar residues" evidence="4">
    <location>
        <begin position="345"/>
        <end position="358"/>
    </location>
</feature>
<feature type="compositionally biased region" description="Polar residues" evidence="4">
    <location>
        <begin position="382"/>
        <end position="397"/>
    </location>
</feature>
<feature type="modified residue" description="Phosphoserine" evidence="2">
    <location>
        <position position="343"/>
    </location>
</feature>
<feature type="modified residue" description="Phosphoserine" evidence="2">
    <location>
        <position position="394"/>
    </location>
</feature>